<accession>Q93Y23</accession>
<accession>Q9SXE0</accession>
<evidence type="ECO:0000255" key="1"/>
<evidence type="ECO:0000269" key="2">
    <source>
    </source>
</evidence>
<evidence type="ECO:0000269" key="3">
    <source>
    </source>
</evidence>
<evidence type="ECO:0000305" key="4"/>
<dbReference type="EC" id="1.14.13.237" evidence="3"/>
<dbReference type="EMBL" id="AC005698">
    <property type="protein sequence ID" value="AAD43614.1"/>
    <property type="status" value="ALT_SEQ"/>
    <property type="molecule type" value="Genomic_DNA"/>
</dbReference>
<dbReference type="EMBL" id="CP002684">
    <property type="protein sequence ID" value="AEE33979.1"/>
    <property type="molecule type" value="Genomic_DNA"/>
</dbReference>
<dbReference type="EMBL" id="AY054642">
    <property type="protein sequence ID" value="AAK96833.1"/>
    <property type="molecule type" value="mRNA"/>
</dbReference>
<dbReference type="EMBL" id="AY081554">
    <property type="protein sequence ID" value="AAM10116.1"/>
    <property type="molecule type" value="mRNA"/>
</dbReference>
<dbReference type="PIR" id="E96651">
    <property type="entry name" value="E96651"/>
</dbReference>
<dbReference type="SMR" id="Q93Y23"/>
<dbReference type="FunCoup" id="Q93Y23">
    <property type="interactions" value="797"/>
</dbReference>
<dbReference type="STRING" id="3702.Q93Y23"/>
<dbReference type="iPTMnet" id="Q93Y23"/>
<dbReference type="PaxDb" id="3702-AT1G62570.1"/>
<dbReference type="ProteomicsDB" id="247135"/>
<dbReference type="EnsemblPlants" id="AT1G62570.1">
    <property type="protein sequence ID" value="AT1G62570.1"/>
    <property type="gene ID" value="AT1G62570"/>
</dbReference>
<dbReference type="GeneID" id="842554"/>
<dbReference type="Gramene" id="AT1G62570.1">
    <property type="protein sequence ID" value="AT1G62570.1"/>
    <property type="gene ID" value="AT1G62570"/>
</dbReference>
<dbReference type="KEGG" id="ath:AT1G62570"/>
<dbReference type="Araport" id="AT1G62570"/>
<dbReference type="TAIR" id="AT1G62570">
    <property type="gene designation" value="FMO GS-OX4"/>
</dbReference>
<dbReference type="eggNOG" id="KOG1399">
    <property type="taxonomic scope" value="Eukaryota"/>
</dbReference>
<dbReference type="HOGENOM" id="CLU_006909_3_0_1"/>
<dbReference type="InParanoid" id="Q93Y23"/>
<dbReference type="OMA" id="VEHWRDQ"/>
<dbReference type="PhylomeDB" id="Q93Y23"/>
<dbReference type="BioCyc" id="MetaCyc:AT1G62570-MONOMER"/>
<dbReference type="BRENDA" id="1.14.13.237">
    <property type="organism ID" value="399"/>
</dbReference>
<dbReference type="PRO" id="PR:Q93Y23"/>
<dbReference type="Proteomes" id="UP000006548">
    <property type="component" value="Chromosome 1"/>
</dbReference>
<dbReference type="ExpressionAtlas" id="Q93Y23">
    <property type="expression patterns" value="baseline and differential"/>
</dbReference>
<dbReference type="GO" id="GO:0080103">
    <property type="term" value="F:4-methylthiopropyl glucosinolate S-oxygenase activity"/>
    <property type="evidence" value="ECO:0000314"/>
    <property type="project" value="TAIR"/>
</dbReference>
<dbReference type="GO" id="GO:0080107">
    <property type="term" value="F:8-methylthiopropyl glucosinolate S-oxygenase activity"/>
    <property type="evidence" value="ECO:0000314"/>
    <property type="project" value="TAIR"/>
</dbReference>
<dbReference type="GO" id="GO:0050660">
    <property type="term" value="F:flavin adenine dinucleotide binding"/>
    <property type="evidence" value="ECO:0007669"/>
    <property type="project" value="InterPro"/>
</dbReference>
<dbReference type="GO" id="GO:0004499">
    <property type="term" value="F:N,N-dimethylaniline monooxygenase activity"/>
    <property type="evidence" value="ECO:0000314"/>
    <property type="project" value="TAIR"/>
</dbReference>
<dbReference type="GO" id="GO:0050661">
    <property type="term" value="F:NADP binding"/>
    <property type="evidence" value="ECO:0007669"/>
    <property type="project" value="InterPro"/>
</dbReference>
<dbReference type="GO" id="GO:0019761">
    <property type="term" value="P:glucosinolate biosynthetic process"/>
    <property type="evidence" value="ECO:0000315"/>
    <property type="project" value="TAIR"/>
</dbReference>
<dbReference type="FunFam" id="3.50.50.60:FF:000099">
    <property type="entry name" value="Flavin-containing monooxygenase"/>
    <property type="match status" value="1"/>
</dbReference>
<dbReference type="Gene3D" id="3.50.50.60">
    <property type="entry name" value="FAD/NAD(P)-binding domain"/>
    <property type="match status" value="2"/>
</dbReference>
<dbReference type="InterPro" id="IPR036188">
    <property type="entry name" value="FAD/NAD-bd_sf"/>
</dbReference>
<dbReference type="InterPro" id="IPR000960">
    <property type="entry name" value="Flavin_mOase"/>
</dbReference>
<dbReference type="InterPro" id="IPR020946">
    <property type="entry name" value="Flavin_mOase-like"/>
</dbReference>
<dbReference type="InterPro" id="IPR050346">
    <property type="entry name" value="FMO-like"/>
</dbReference>
<dbReference type="PANTHER" id="PTHR23023">
    <property type="entry name" value="DIMETHYLANILINE MONOOXYGENASE"/>
    <property type="match status" value="1"/>
</dbReference>
<dbReference type="Pfam" id="PF00743">
    <property type="entry name" value="FMO-like"/>
    <property type="match status" value="2"/>
</dbReference>
<dbReference type="PIRSF" id="PIRSF000332">
    <property type="entry name" value="FMO"/>
    <property type="match status" value="1"/>
</dbReference>
<dbReference type="PRINTS" id="PR00370">
    <property type="entry name" value="FMOXYGENASE"/>
</dbReference>
<dbReference type="SUPFAM" id="SSF51905">
    <property type="entry name" value="FAD/NAD(P)-binding domain"/>
    <property type="match status" value="2"/>
</dbReference>
<reference key="1">
    <citation type="journal article" date="2000" name="Nature">
        <title>Sequence and analysis of chromosome 1 of the plant Arabidopsis thaliana.</title>
        <authorList>
            <person name="Theologis A."/>
            <person name="Ecker J.R."/>
            <person name="Palm C.J."/>
            <person name="Federspiel N.A."/>
            <person name="Kaul S."/>
            <person name="White O."/>
            <person name="Alonso J."/>
            <person name="Altafi H."/>
            <person name="Araujo R."/>
            <person name="Bowman C.L."/>
            <person name="Brooks S.Y."/>
            <person name="Buehler E."/>
            <person name="Chan A."/>
            <person name="Chao Q."/>
            <person name="Chen H."/>
            <person name="Cheuk R.F."/>
            <person name="Chin C.W."/>
            <person name="Chung M.K."/>
            <person name="Conn L."/>
            <person name="Conway A.B."/>
            <person name="Conway A.R."/>
            <person name="Creasy T.H."/>
            <person name="Dewar K."/>
            <person name="Dunn P."/>
            <person name="Etgu P."/>
            <person name="Feldblyum T.V."/>
            <person name="Feng J.-D."/>
            <person name="Fong B."/>
            <person name="Fujii C.Y."/>
            <person name="Gill J.E."/>
            <person name="Goldsmith A.D."/>
            <person name="Haas B."/>
            <person name="Hansen N.F."/>
            <person name="Hughes B."/>
            <person name="Huizar L."/>
            <person name="Hunter J.L."/>
            <person name="Jenkins J."/>
            <person name="Johnson-Hopson C."/>
            <person name="Khan S."/>
            <person name="Khaykin E."/>
            <person name="Kim C.J."/>
            <person name="Koo H.L."/>
            <person name="Kremenetskaia I."/>
            <person name="Kurtz D.B."/>
            <person name="Kwan A."/>
            <person name="Lam B."/>
            <person name="Langin-Hooper S."/>
            <person name="Lee A."/>
            <person name="Lee J.M."/>
            <person name="Lenz C.A."/>
            <person name="Li J.H."/>
            <person name="Li Y.-P."/>
            <person name="Lin X."/>
            <person name="Liu S.X."/>
            <person name="Liu Z.A."/>
            <person name="Luros J.S."/>
            <person name="Maiti R."/>
            <person name="Marziali A."/>
            <person name="Militscher J."/>
            <person name="Miranda M."/>
            <person name="Nguyen M."/>
            <person name="Nierman W.C."/>
            <person name="Osborne B.I."/>
            <person name="Pai G."/>
            <person name="Peterson J."/>
            <person name="Pham P.K."/>
            <person name="Rizzo M."/>
            <person name="Rooney T."/>
            <person name="Rowley D."/>
            <person name="Sakano H."/>
            <person name="Salzberg S.L."/>
            <person name="Schwartz J.R."/>
            <person name="Shinn P."/>
            <person name="Southwick A.M."/>
            <person name="Sun H."/>
            <person name="Tallon L.J."/>
            <person name="Tambunga G."/>
            <person name="Toriumi M.J."/>
            <person name="Town C.D."/>
            <person name="Utterback T."/>
            <person name="Van Aken S."/>
            <person name="Vaysberg M."/>
            <person name="Vysotskaia V.S."/>
            <person name="Walker M."/>
            <person name="Wu D."/>
            <person name="Yu G."/>
            <person name="Fraser C.M."/>
            <person name="Venter J.C."/>
            <person name="Davis R.W."/>
        </authorList>
    </citation>
    <scope>NUCLEOTIDE SEQUENCE [LARGE SCALE GENOMIC DNA]</scope>
    <source>
        <strain>cv. Columbia</strain>
    </source>
</reference>
<reference key="2">
    <citation type="journal article" date="2017" name="Plant J.">
        <title>Araport11: a complete reannotation of the Arabidopsis thaliana reference genome.</title>
        <authorList>
            <person name="Cheng C.Y."/>
            <person name="Krishnakumar V."/>
            <person name="Chan A.P."/>
            <person name="Thibaud-Nissen F."/>
            <person name="Schobel S."/>
            <person name="Town C.D."/>
        </authorList>
    </citation>
    <scope>GENOME REANNOTATION</scope>
    <source>
        <strain>cv. Columbia</strain>
    </source>
</reference>
<reference key="3">
    <citation type="journal article" date="2003" name="Science">
        <title>Empirical analysis of transcriptional activity in the Arabidopsis genome.</title>
        <authorList>
            <person name="Yamada K."/>
            <person name="Lim J."/>
            <person name="Dale J.M."/>
            <person name="Chen H."/>
            <person name="Shinn P."/>
            <person name="Palm C.J."/>
            <person name="Southwick A.M."/>
            <person name="Wu H.C."/>
            <person name="Kim C.J."/>
            <person name="Nguyen M."/>
            <person name="Pham P.K."/>
            <person name="Cheuk R.F."/>
            <person name="Karlin-Newmann G."/>
            <person name="Liu S.X."/>
            <person name="Lam B."/>
            <person name="Sakano H."/>
            <person name="Wu T."/>
            <person name="Yu G."/>
            <person name="Miranda M."/>
            <person name="Quach H.L."/>
            <person name="Tripp M."/>
            <person name="Chang C.H."/>
            <person name="Lee J.M."/>
            <person name="Toriumi M.J."/>
            <person name="Chan M.M."/>
            <person name="Tang C.C."/>
            <person name="Onodera C.S."/>
            <person name="Deng J.M."/>
            <person name="Akiyama K."/>
            <person name="Ansari Y."/>
            <person name="Arakawa T."/>
            <person name="Banh J."/>
            <person name="Banno F."/>
            <person name="Bowser L."/>
            <person name="Brooks S.Y."/>
            <person name="Carninci P."/>
            <person name="Chao Q."/>
            <person name="Choy N."/>
            <person name="Enju A."/>
            <person name="Goldsmith A.D."/>
            <person name="Gurjal M."/>
            <person name="Hansen N.F."/>
            <person name="Hayashizaki Y."/>
            <person name="Johnson-Hopson C."/>
            <person name="Hsuan V.W."/>
            <person name="Iida K."/>
            <person name="Karnes M."/>
            <person name="Khan S."/>
            <person name="Koesema E."/>
            <person name="Ishida J."/>
            <person name="Jiang P.X."/>
            <person name="Jones T."/>
            <person name="Kawai J."/>
            <person name="Kamiya A."/>
            <person name="Meyers C."/>
            <person name="Nakajima M."/>
            <person name="Narusaka M."/>
            <person name="Seki M."/>
            <person name="Sakurai T."/>
            <person name="Satou M."/>
            <person name="Tamse R."/>
            <person name="Vaysberg M."/>
            <person name="Wallender E.K."/>
            <person name="Wong C."/>
            <person name="Yamamura Y."/>
            <person name="Yuan S."/>
            <person name="Shinozaki K."/>
            <person name="Davis R.W."/>
            <person name="Theologis A."/>
            <person name="Ecker J.R."/>
        </authorList>
    </citation>
    <scope>NUCLEOTIDE SEQUENCE [LARGE SCALE MRNA]</scope>
    <source>
        <strain>cv. Columbia</strain>
    </source>
</reference>
<reference key="4">
    <citation type="journal article" date="2002" name="Plant Physiol.">
        <title>Transcriptome changes for Arabidopsis in response to salt, osmotic, and cold stress.</title>
        <authorList>
            <person name="Kreps J.A."/>
            <person name="Wu Y."/>
            <person name="Chang H.S."/>
            <person name="Zhu T."/>
            <person name="Wang X."/>
            <person name="Harper J.F."/>
        </authorList>
    </citation>
    <scope>INDUCTION</scope>
</reference>
<reference key="5">
    <citation type="journal article" date="2007" name="Plant J.">
        <title>Identification of a flavin-monooxygenase as the S-oxygenating enzyme in aliphatic glucosinolate biosynthesis in Arabidopsis.</title>
        <authorList>
            <person name="Hansen B.G."/>
            <person name="Kliebenstein D.J."/>
            <person name="Halkier B.A."/>
        </authorList>
    </citation>
    <scope>GENE FAMILY</scope>
    <source>
        <strain>cv. Columbia</strain>
    </source>
</reference>
<reference key="6">
    <citation type="journal article" date="2008" name="Plant Physiol.">
        <title>Subclade of flavin-monooxygenases involved in aliphatic glucosinolate biosynthesis.</title>
        <authorList>
            <person name="Li J."/>
            <person name="Hansen B.G."/>
            <person name="Ober J.A."/>
            <person name="Kliebenstein D.J."/>
            <person name="Halkier B.A."/>
        </authorList>
    </citation>
    <scope>FUNCTION</scope>
    <scope>CATALYTIC ACTIVITY</scope>
    <scope>DISRUPTION PHENOTYPE</scope>
    <source>
        <strain>cv. Columbia</strain>
    </source>
</reference>
<feature type="chain" id="PRO_0000360994" description="Flavin-containing monooxygenase FMO GS-OX4">
    <location>
        <begin position="1"/>
        <end position="461"/>
    </location>
</feature>
<feature type="binding site" evidence="1">
    <location>
        <begin position="17"/>
        <end position="22"/>
    </location>
    <ligand>
        <name>FAD</name>
        <dbReference type="ChEBI" id="CHEBI:57692"/>
    </ligand>
</feature>
<feature type="binding site" evidence="1">
    <location>
        <begin position="211"/>
        <end position="216"/>
    </location>
    <ligand>
        <name>NADP(+)</name>
        <dbReference type="ChEBI" id="CHEBI:58349"/>
    </ligand>
</feature>
<name>GSOX4_ARATH</name>
<keyword id="KW-0274">FAD</keyword>
<keyword id="KW-0285">Flavoprotein</keyword>
<keyword id="KW-0503">Monooxygenase</keyword>
<keyword id="KW-0521">NADP</keyword>
<keyword id="KW-0560">Oxidoreductase</keyword>
<keyword id="KW-1185">Reference proteome</keyword>
<sequence>MAPAPSPINSQHVAVIGAGAAGLVAARELRREGHTVVVLDREKQVGGLWVYTPETESDELGLDPTRPIVHSSVYKSLRTNLPRECMGYKDFPFVPRGDDPSRDSRRYPSHREVLAYLQDFATEFNIEEMIRFETEVLRVEPVNGKWRVQSKTGGGFSNDEIYDAVVMCCGHFAEPNIAQIPGIESWPGRQTHSHSYRVPDPFKDEVVVVIGNFASGADISRDISKVAKEVHIASRASKSNTFEKRPVPNNNLWMHSEIDTAHEDGTIVFKNGKVVHADTIVHCTGYKYYFPFLETNNYMRVDDNRVEPLYKHIFPPALAPGLSFIGLPAMGLQFYMFEVQSKWVAAVLSGRVTLPSVDEMMDDLKLSYETQEALGIPKRYTHKLGKSQCEYLDWIADLCGFPHVEHWRDQEVTRGYQRLGNQPETFRDEWDDDDLMEEAYEDFARLNLINFHPSRFLESGR</sequence>
<organism>
    <name type="scientific">Arabidopsis thaliana</name>
    <name type="common">Mouse-ear cress</name>
    <dbReference type="NCBI Taxonomy" id="3702"/>
    <lineage>
        <taxon>Eukaryota</taxon>
        <taxon>Viridiplantae</taxon>
        <taxon>Streptophyta</taxon>
        <taxon>Embryophyta</taxon>
        <taxon>Tracheophyta</taxon>
        <taxon>Spermatophyta</taxon>
        <taxon>Magnoliopsida</taxon>
        <taxon>eudicotyledons</taxon>
        <taxon>Gunneridae</taxon>
        <taxon>Pentapetalae</taxon>
        <taxon>rosids</taxon>
        <taxon>malvids</taxon>
        <taxon>Brassicales</taxon>
        <taxon>Brassicaceae</taxon>
        <taxon>Camelineae</taxon>
        <taxon>Arabidopsis</taxon>
    </lineage>
</organism>
<comment type="function">
    <text evidence="3">Catalyzes the conversion of methylthioalkyl glucosinolates of any chain length into methylsulfinylalkyl glucosinolates.</text>
</comment>
<comment type="catalytic activity">
    <reaction evidence="3">
        <text>a (Z)-omega-(methylsulfanyl)-N-sulfo-alkylhydroximate S-glucoside + NADPH + O2 + H(+) = a (Z)-omega-(methylsulfinyl)-alkyl-glucosinolate + NADP(+) + H2O</text>
        <dbReference type="Rhea" id="RHEA:42208"/>
        <dbReference type="Rhea" id="RHEA-COMP:13194"/>
        <dbReference type="Rhea" id="RHEA-COMP:13195"/>
        <dbReference type="ChEBI" id="CHEBI:15377"/>
        <dbReference type="ChEBI" id="CHEBI:15378"/>
        <dbReference type="ChEBI" id="CHEBI:15379"/>
        <dbReference type="ChEBI" id="CHEBI:57783"/>
        <dbReference type="ChEBI" id="CHEBI:58349"/>
        <dbReference type="ChEBI" id="CHEBI:136434"/>
        <dbReference type="ChEBI" id="CHEBI:136435"/>
        <dbReference type="EC" id="1.14.13.237"/>
    </reaction>
</comment>
<comment type="induction">
    <text evidence="2">Up-regulated in roots by salt, osmotic and cold stresses.</text>
</comment>
<comment type="disruption phenotype">
    <text evidence="3">No visible phenotype in leaves or seeds; due to the redundancy with other FMO GS-OXs.</text>
</comment>
<comment type="similarity">
    <text evidence="4">Belongs to the FMO family.</text>
</comment>
<comment type="sequence caution" evidence="4">
    <conflict type="erroneous gene model prediction">
        <sequence resource="EMBL-CDS" id="AAD43614"/>
    </conflict>
</comment>
<gene>
    <name type="primary">FMOGS-OX4</name>
    <name type="ordered locus">At1g62570</name>
    <name type="ORF">T3P18.13</name>
</gene>
<proteinExistence type="evidence at protein level"/>
<protein>
    <recommendedName>
        <fullName>Flavin-containing monooxygenase FMO GS-OX4</fullName>
        <ecNumber evidence="3">1.14.13.237</ecNumber>
    </recommendedName>
    <alternativeName>
        <fullName>Flavin-monooxygenase glucosinolate S-oxygenase 4</fullName>
    </alternativeName>
</protein>